<dbReference type="EC" id="2.7.1.32"/>
<dbReference type="EMBL" id="AC020579">
    <property type="protein sequence ID" value="AAG52400.1"/>
    <property type="status" value="ALT_INIT"/>
    <property type="molecule type" value="Genomic_DNA"/>
</dbReference>
<dbReference type="EMBL" id="CP002684">
    <property type="protein sequence ID" value="AEE35577.1"/>
    <property type="molecule type" value="Genomic_DNA"/>
</dbReference>
<dbReference type="EMBL" id="AY094430">
    <property type="protein sequence ID" value="AAM19803.1"/>
    <property type="molecule type" value="mRNA"/>
</dbReference>
<dbReference type="EMBL" id="AY140093">
    <property type="protein sequence ID" value="AAM98234.1"/>
    <property type="molecule type" value="mRNA"/>
</dbReference>
<dbReference type="EMBL" id="BT008737">
    <property type="protein sequence ID" value="AAP42750.1"/>
    <property type="molecule type" value="mRNA"/>
</dbReference>
<dbReference type="PIR" id="G96771">
    <property type="entry name" value="G96771"/>
</dbReference>
<dbReference type="RefSeq" id="NP_177572.2">
    <property type="nucleotide sequence ID" value="NM_106092.4"/>
</dbReference>
<dbReference type="SMR" id="Q8L518"/>
<dbReference type="FunCoup" id="Q8L518">
    <property type="interactions" value="270"/>
</dbReference>
<dbReference type="STRING" id="3702.Q8L518"/>
<dbReference type="PaxDb" id="3702-AT1G74320.1"/>
<dbReference type="ProteomicsDB" id="246869"/>
<dbReference type="EnsemblPlants" id="AT1G74320.1">
    <property type="protein sequence ID" value="AT1G74320.1"/>
    <property type="gene ID" value="AT1G74320"/>
</dbReference>
<dbReference type="GeneID" id="843772"/>
<dbReference type="Gramene" id="AT1G74320.1">
    <property type="protein sequence ID" value="AT1G74320.1"/>
    <property type="gene ID" value="AT1G74320"/>
</dbReference>
<dbReference type="KEGG" id="ath:AT1G74320"/>
<dbReference type="Araport" id="AT1G74320"/>
<dbReference type="TAIR" id="AT1G74320">
    <property type="gene designation" value="CEK2"/>
</dbReference>
<dbReference type="eggNOG" id="KOG2686">
    <property type="taxonomic scope" value="Eukaryota"/>
</dbReference>
<dbReference type="HOGENOM" id="CLU_012712_0_2_1"/>
<dbReference type="InParanoid" id="Q8L518"/>
<dbReference type="OMA" id="FALIPKY"/>
<dbReference type="PhylomeDB" id="Q8L518"/>
<dbReference type="BioCyc" id="ARA:AT1G74320-MONOMER"/>
<dbReference type="BRENDA" id="2.7.1.32">
    <property type="organism ID" value="399"/>
</dbReference>
<dbReference type="UniPathway" id="UPA00753">
    <property type="reaction ID" value="UER00737"/>
</dbReference>
<dbReference type="PRO" id="PR:Q8L518"/>
<dbReference type="Proteomes" id="UP000006548">
    <property type="component" value="Chromosome 1"/>
</dbReference>
<dbReference type="ExpressionAtlas" id="Q8L518">
    <property type="expression patterns" value="baseline and differential"/>
</dbReference>
<dbReference type="GO" id="GO:0005524">
    <property type="term" value="F:ATP binding"/>
    <property type="evidence" value="ECO:0007669"/>
    <property type="project" value="UniProtKB-KW"/>
</dbReference>
<dbReference type="GO" id="GO:0004103">
    <property type="term" value="F:choline kinase activity"/>
    <property type="evidence" value="ECO:0007669"/>
    <property type="project" value="UniProtKB-EC"/>
</dbReference>
<dbReference type="CDD" id="cd05157">
    <property type="entry name" value="ETNK_euk"/>
    <property type="match status" value="1"/>
</dbReference>
<dbReference type="Gene3D" id="3.90.1200.10">
    <property type="match status" value="1"/>
</dbReference>
<dbReference type="Gene3D" id="3.30.200.20">
    <property type="entry name" value="Phosphorylase Kinase, domain 1"/>
    <property type="match status" value="1"/>
</dbReference>
<dbReference type="InterPro" id="IPR011009">
    <property type="entry name" value="Kinase-like_dom_sf"/>
</dbReference>
<dbReference type="PANTHER" id="PTHR22603:SF81">
    <property type="entry name" value="CHOLINE KINASE 2-RELATED"/>
    <property type="match status" value="1"/>
</dbReference>
<dbReference type="PANTHER" id="PTHR22603">
    <property type="entry name" value="CHOLINE/ETHANOALAMINE KINASE"/>
    <property type="match status" value="1"/>
</dbReference>
<dbReference type="Pfam" id="PF01633">
    <property type="entry name" value="Choline_kinase"/>
    <property type="match status" value="1"/>
</dbReference>
<dbReference type="SUPFAM" id="SSF56112">
    <property type="entry name" value="Protein kinase-like (PK-like)"/>
    <property type="match status" value="1"/>
</dbReference>
<sequence>MTMGGTEKNVENKQYRLPREVKEALQAIASEWEDVIDSKALQVIPLKGAMTNEVFQIKWPTREKGPSRKVLVRIYGEGVEIFFDREDEIRTFEFMSKHGHGPLLLGRFGNGRIEEFLHARTLSACDLRDPEISGRIATRMKEFHGLEMPGAKKALLWDRLRNWLTACKRLASPEEAKSFRLDVMEMEINMLEKSLFDNDENIGFCHNDLQYGNIMMDEETKAITIIDYEYSCYNPVAYDIANHFCEMAADYHTETPHIMDYSKYPGVEERQRFLKTYMSYSDEKPSDTMVKKLLEDVEKYTLASHLIWGLWGIISEHVNEIDFDYMEYARQRFEQYWLTKPRLLAASEHK</sequence>
<keyword id="KW-0067">ATP-binding</keyword>
<keyword id="KW-0418">Kinase</keyword>
<keyword id="KW-0444">Lipid biosynthesis</keyword>
<keyword id="KW-0443">Lipid metabolism</keyword>
<keyword id="KW-0547">Nucleotide-binding</keyword>
<keyword id="KW-0594">Phospholipid biosynthesis</keyword>
<keyword id="KW-1208">Phospholipid metabolism</keyword>
<keyword id="KW-1185">Reference proteome</keyword>
<keyword id="KW-0808">Transferase</keyword>
<organism>
    <name type="scientific">Arabidopsis thaliana</name>
    <name type="common">Mouse-ear cress</name>
    <dbReference type="NCBI Taxonomy" id="3702"/>
    <lineage>
        <taxon>Eukaryota</taxon>
        <taxon>Viridiplantae</taxon>
        <taxon>Streptophyta</taxon>
        <taxon>Embryophyta</taxon>
        <taxon>Tracheophyta</taxon>
        <taxon>Spermatophyta</taxon>
        <taxon>Magnoliopsida</taxon>
        <taxon>eudicotyledons</taxon>
        <taxon>Gunneridae</taxon>
        <taxon>Pentapetalae</taxon>
        <taxon>rosids</taxon>
        <taxon>malvids</taxon>
        <taxon>Brassicales</taxon>
        <taxon>Brassicaceae</taxon>
        <taxon>Camelineae</taxon>
        <taxon>Arabidopsis</taxon>
    </lineage>
</organism>
<comment type="function">
    <text evidence="1">Involved in phospholipid biosynthesis. Catalyzes the first step in phosphatidylcholine biosynthesis (By similarity).</text>
</comment>
<comment type="catalytic activity">
    <reaction>
        <text>choline + ATP = phosphocholine + ADP + H(+)</text>
        <dbReference type="Rhea" id="RHEA:12837"/>
        <dbReference type="ChEBI" id="CHEBI:15354"/>
        <dbReference type="ChEBI" id="CHEBI:15378"/>
        <dbReference type="ChEBI" id="CHEBI:30616"/>
        <dbReference type="ChEBI" id="CHEBI:295975"/>
        <dbReference type="ChEBI" id="CHEBI:456216"/>
        <dbReference type="EC" id="2.7.1.32"/>
    </reaction>
</comment>
<comment type="pathway">
    <text>Phospholipid metabolism; phosphatidylcholine biosynthesis; phosphocholine from choline: step 1/1.</text>
</comment>
<comment type="induction">
    <text evidence="2">By wounding, and salt and osmotic stresses.</text>
</comment>
<comment type="similarity">
    <text evidence="3">Belongs to the choline/ethanolamine kinase family.</text>
</comment>
<comment type="sequence caution" evidence="3">
    <conflict type="erroneous initiation">
        <sequence resource="EMBL-CDS" id="AAG52400"/>
    </conflict>
    <text>Truncated N-terminus.</text>
</comment>
<feature type="chain" id="PRO_0000423347" description="Probable choline kinase 2">
    <location>
        <begin position="1"/>
        <end position="350"/>
    </location>
</feature>
<feature type="binding site" evidence="1">
    <location>
        <position position="73"/>
    </location>
    <ligand>
        <name>ATP</name>
        <dbReference type="ChEBI" id="CHEBI:30616"/>
    </ligand>
</feature>
<feature type="binding site" evidence="1">
    <location>
        <position position="210"/>
    </location>
    <ligand>
        <name>ATP</name>
        <dbReference type="ChEBI" id="CHEBI:30616"/>
    </ligand>
</feature>
<feature type="binding site" evidence="1">
    <location>
        <position position="227"/>
    </location>
    <ligand>
        <name>ATP</name>
        <dbReference type="ChEBI" id="CHEBI:30616"/>
    </ligand>
</feature>
<evidence type="ECO:0000250" key="1"/>
<evidence type="ECO:0000269" key="2">
    <source>
    </source>
</evidence>
<evidence type="ECO:0000305" key="3"/>
<proteinExistence type="evidence at transcript level"/>
<reference key="1">
    <citation type="journal article" date="2000" name="Nature">
        <title>Sequence and analysis of chromosome 1 of the plant Arabidopsis thaliana.</title>
        <authorList>
            <person name="Theologis A."/>
            <person name="Ecker J.R."/>
            <person name="Palm C.J."/>
            <person name="Federspiel N.A."/>
            <person name="Kaul S."/>
            <person name="White O."/>
            <person name="Alonso J."/>
            <person name="Altafi H."/>
            <person name="Araujo R."/>
            <person name="Bowman C.L."/>
            <person name="Brooks S.Y."/>
            <person name="Buehler E."/>
            <person name="Chan A."/>
            <person name="Chao Q."/>
            <person name="Chen H."/>
            <person name="Cheuk R.F."/>
            <person name="Chin C.W."/>
            <person name="Chung M.K."/>
            <person name="Conn L."/>
            <person name="Conway A.B."/>
            <person name="Conway A.R."/>
            <person name="Creasy T.H."/>
            <person name="Dewar K."/>
            <person name="Dunn P."/>
            <person name="Etgu P."/>
            <person name="Feldblyum T.V."/>
            <person name="Feng J.-D."/>
            <person name="Fong B."/>
            <person name="Fujii C.Y."/>
            <person name="Gill J.E."/>
            <person name="Goldsmith A.D."/>
            <person name="Haas B."/>
            <person name="Hansen N.F."/>
            <person name="Hughes B."/>
            <person name="Huizar L."/>
            <person name="Hunter J.L."/>
            <person name="Jenkins J."/>
            <person name="Johnson-Hopson C."/>
            <person name="Khan S."/>
            <person name="Khaykin E."/>
            <person name="Kim C.J."/>
            <person name="Koo H.L."/>
            <person name="Kremenetskaia I."/>
            <person name="Kurtz D.B."/>
            <person name="Kwan A."/>
            <person name="Lam B."/>
            <person name="Langin-Hooper S."/>
            <person name="Lee A."/>
            <person name="Lee J.M."/>
            <person name="Lenz C.A."/>
            <person name="Li J.H."/>
            <person name="Li Y.-P."/>
            <person name="Lin X."/>
            <person name="Liu S.X."/>
            <person name="Liu Z.A."/>
            <person name="Luros J.S."/>
            <person name="Maiti R."/>
            <person name="Marziali A."/>
            <person name="Militscher J."/>
            <person name="Miranda M."/>
            <person name="Nguyen M."/>
            <person name="Nierman W.C."/>
            <person name="Osborne B.I."/>
            <person name="Pai G."/>
            <person name="Peterson J."/>
            <person name="Pham P.K."/>
            <person name="Rizzo M."/>
            <person name="Rooney T."/>
            <person name="Rowley D."/>
            <person name="Sakano H."/>
            <person name="Salzberg S.L."/>
            <person name="Schwartz J.R."/>
            <person name="Shinn P."/>
            <person name="Southwick A.M."/>
            <person name="Sun H."/>
            <person name="Tallon L.J."/>
            <person name="Tambunga G."/>
            <person name="Toriumi M.J."/>
            <person name="Town C.D."/>
            <person name="Utterback T."/>
            <person name="Van Aken S."/>
            <person name="Vaysberg M."/>
            <person name="Vysotskaia V.S."/>
            <person name="Walker M."/>
            <person name="Wu D."/>
            <person name="Yu G."/>
            <person name="Fraser C.M."/>
            <person name="Venter J.C."/>
            <person name="Davis R.W."/>
        </authorList>
    </citation>
    <scope>NUCLEOTIDE SEQUENCE [LARGE SCALE GENOMIC DNA]</scope>
    <source>
        <strain>cv. Columbia</strain>
    </source>
</reference>
<reference key="2">
    <citation type="journal article" date="2017" name="Plant J.">
        <title>Araport11: a complete reannotation of the Arabidopsis thaliana reference genome.</title>
        <authorList>
            <person name="Cheng C.Y."/>
            <person name="Krishnakumar V."/>
            <person name="Chan A.P."/>
            <person name="Thibaud-Nissen F."/>
            <person name="Schobel S."/>
            <person name="Town C.D."/>
        </authorList>
    </citation>
    <scope>GENOME REANNOTATION</scope>
    <source>
        <strain>cv. Columbia</strain>
    </source>
</reference>
<reference key="3">
    <citation type="journal article" date="2003" name="Science">
        <title>Empirical analysis of transcriptional activity in the Arabidopsis genome.</title>
        <authorList>
            <person name="Yamada K."/>
            <person name="Lim J."/>
            <person name="Dale J.M."/>
            <person name="Chen H."/>
            <person name="Shinn P."/>
            <person name="Palm C.J."/>
            <person name="Southwick A.M."/>
            <person name="Wu H.C."/>
            <person name="Kim C.J."/>
            <person name="Nguyen M."/>
            <person name="Pham P.K."/>
            <person name="Cheuk R.F."/>
            <person name="Karlin-Newmann G."/>
            <person name="Liu S.X."/>
            <person name="Lam B."/>
            <person name="Sakano H."/>
            <person name="Wu T."/>
            <person name="Yu G."/>
            <person name="Miranda M."/>
            <person name="Quach H.L."/>
            <person name="Tripp M."/>
            <person name="Chang C.H."/>
            <person name="Lee J.M."/>
            <person name="Toriumi M.J."/>
            <person name="Chan M.M."/>
            <person name="Tang C.C."/>
            <person name="Onodera C.S."/>
            <person name="Deng J.M."/>
            <person name="Akiyama K."/>
            <person name="Ansari Y."/>
            <person name="Arakawa T."/>
            <person name="Banh J."/>
            <person name="Banno F."/>
            <person name="Bowser L."/>
            <person name="Brooks S.Y."/>
            <person name="Carninci P."/>
            <person name="Chao Q."/>
            <person name="Choy N."/>
            <person name="Enju A."/>
            <person name="Goldsmith A.D."/>
            <person name="Gurjal M."/>
            <person name="Hansen N.F."/>
            <person name="Hayashizaki Y."/>
            <person name="Johnson-Hopson C."/>
            <person name="Hsuan V.W."/>
            <person name="Iida K."/>
            <person name="Karnes M."/>
            <person name="Khan S."/>
            <person name="Koesema E."/>
            <person name="Ishida J."/>
            <person name="Jiang P.X."/>
            <person name="Jones T."/>
            <person name="Kawai J."/>
            <person name="Kamiya A."/>
            <person name="Meyers C."/>
            <person name="Nakajima M."/>
            <person name="Narusaka M."/>
            <person name="Seki M."/>
            <person name="Sakurai T."/>
            <person name="Satou M."/>
            <person name="Tamse R."/>
            <person name="Vaysberg M."/>
            <person name="Wallender E.K."/>
            <person name="Wong C."/>
            <person name="Yamamura Y."/>
            <person name="Yuan S."/>
            <person name="Shinozaki K."/>
            <person name="Davis R.W."/>
            <person name="Theologis A."/>
            <person name="Ecker J.R."/>
        </authorList>
    </citation>
    <scope>NUCLEOTIDE SEQUENCE [LARGE SCALE MRNA]</scope>
    <source>
        <strain>cv. Columbia</strain>
    </source>
</reference>
<reference key="4">
    <citation type="journal article" date="2004" name="FEBS Lett.">
        <title>Regulation of phosphatidylcholine biosynthesis under salt stress involves choline kinases in Arabidopsis thaliana.</title>
        <authorList>
            <person name="Tasseva G."/>
            <person name="Richard L."/>
            <person name="Zachowski A."/>
        </authorList>
    </citation>
    <scope>INDUCTION</scope>
</reference>
<gene>
    <name type="ordered locus">At1g74320</name>
    <name type="ORF">F1O17.1</name>
</gene>
<protein>
    <recommendedName>
        <fullName>Probable choline kinase 2</fullName>
        <ecNumber>2.7.1.32</ecNumber>
    </recommendedName>
</protein>
<name>CK2_ARATH</name>
<accession>Q8L518</accession>
<accession>Q9C916</accession>